<accession>Q0IDV6</accession>
<protein>
    <recommendedName>
        <fullName evidence="1">Phosphomethylpyrimidine synthase</fullName>
        <ecNumber evidence="1">4.1.99.17</ecNumber>
    </recommendedName>
    <alternativeName>
        <fullName evidence="1">Hydroxymethylpyrimidine phosphate synthase</fullName>
        <shortName evidence="1">HMP-P synthase</shortName>
        <shortName evidence="1">HMP-phosphate synthase</shortName>
        <shortName evidence="1">HMPP synthase</shortName>
    </alternativeName>
    <alternativeName>
        <fullName evidence="1">Thiamine biosynthesis protein ThiC</fullName>
    </alternativeName>
</protein>
<reference key="1">
    <citation type="journal article" date="2006" name="Proc. Natl. Acad. Sci. U.S.A.">
        <title>Genome sequence of Synechococcus CC9311: insights into adaptation to a coastal environment.</title>
        <authorList>
            <person name="Palenik B."/>
            <person name="Ren Q."/>
            <person name="Dupont C.L."/>
            <person name="Myers G.S."/>
            <person name="Heidelberg J.F."/>
            <person name="Badger J.H."/>
            <person name="Madupu R."/>
            <person name="Nelson W.C."/>
            <person name="Brinkac L.M."/>
            <person name="Dodson R.J."/>
            <person name="Durkin A.S."/>
            <person name="Daugherty S.C."/>
            <person name="Sullivan S.A."/>
            <person name="Khouri H."/>
            <person name="Mohamoud Y."/>
            <person name="Halpin R."/>
            <person name="Paulsen I.T."/>
        </authorList>
    </citation>
    <scope>NUCLEOTIDE SEQUENCE [LARGE SCALE GENOMIC DNA]</scope>
    <source>
        <strain>CC9311</strain>
    </source>
</reference>
<proteinExistence type="inferred from homology"/>
<evidence type="ECO:0000255" key="1">
    <source>
        <dbReference type="HAMAP-Rule" id="MF_00089"/>
    </source>
</evidence>
<sequence>MRTEWVSARKGQANVSQMHYARKGVVTEEMAYVAKIENLPESLVMEEVARGRMIIPANVNHTNLEPMAIGIASKCKVNANIGASPNASDAAEEVNKLKLAVKYGADTVMDLSTGGVNLDEVRTSIIGASSVPIGTVPVYQALESVHGSIEKLDEDDFLHIIEKHCQQGVDYQTIHAGLLIEHLPKVKGRLTGIVSRGGGILAQWMLYHHRQNPLFTRFDDICEIFKRYDCTFSLGDSLRPGCQHDASDAAQLAELKTLGDLTRRAWKHDVQVMVEGPGHVPLDQIEFNVKKQMEECNEAPFYVLGPLVTDIAPGYDHITSAIGAAMAGWHGTAMLCYVTPKEHLGLPNAEDVREGLIAYKIAAHAADIARHRPGARDRDDELSRARYAFDWNKQFELSLDPERAKEYHDETLPADIYKQAEFCSMCGPKHCPMQTKITDADLDGLEQVLKSQGAAELVGVKQDKL</sequence>
<keyword id="KW-0004">4Fe-4S</keyword>
<keyword id="KW-0408">Iron</keyword>
<keyword id="KW-0411">Iron-sulfur</keyword>
<keyword id="KW-0456">Lyase</keyword>
<keyword id="KW-0479">Metal-binding</keyword>
<keyword id="KW-1185">Reference proteome</keyword>
<keyword id="KW-0949">S-adenosyl-L-methionine</keyword>
<keyword id="KW-0784">Thiamine biosynthesis</keyword>
<keyword id="KW-0862">Zinc</keyword>
<comment type="function">
    <text evidence="1">Catalyzes the synthesis of the hydroxymethylpyrimidine phosphate (HMP-P) moiety of thiamine from aminoimidazole ribotide (AIR) in a radical S-adenosyl-L-methionine (SAM)-dependent reaction.</text>
</comment>
<comment type="catalytic activity">
    <reaction evidence="1">
        <text>5-amino-1-(5-phospho-beta-D-ribosyl)imidazole + S-adenosyl-L-methionine = 4-amino-2-methyl-5-(phosphooxymethyl)pyrimidine + CO + 5'-deoxyadenosine + formate + L-methionine + 3 H(+)</text>
        <dbReference type="Rhea" id="RHEA:24840"/>
        <dbReference type="ChEBI" id="CHEBI:15378"/>
        <dbReference type="ChEBI" id="CHEBI:15740"/>
        <dbReference type="ChEBI" id="CHEBI:17245"/>
        <dbReference type="ChEBI" id="CHEBI:17319"/>
        <dbReference type="ChEBI" id="CHEBI:57844"/>
        <dbReference type="ChEBI" id="CHEBI:58354"/>
        <dbReference type="ChEBI" id="CHEBI:59789"/>
        <dbReference type="ChEBI" id="CHEBI:137981"/>
        <dbReference type="EC" id="4.1.99.17"/>
    </reaction>
</comment>
<comment type="cofactor">
    <cofactor evidence="1">
        <name>[4Fe-4S] cluster</name>
        <dbReference type="ChEBI" id="CHEBI:49883"/>
    </cofactor>
    <text evidence="1">Binds 1 [4Fe-4S] cluster per subunit. The cluster is coordinated with 3 cysteines and an exchangeable S-adenosyl-L-methionine.</text>
</comment>
<comment type="pathway">
    <text evidence="1">Cofactor biosynthesis; thiamine diphosphate biosynthesis.</text>
</comment>
<comment type="similarity">
    <text evidence="1">Belongs to the ThiC family.</text>
</comment>
<dbReference type="EC" id="4.1.99.17" evidence="1"/>
<dbReference type="EMBL" id="CP000435">
    <property type="protein sequence ID" value="ABI47377.1"/>
    <property type="molecule type" value="Genomic_DNA"/>
</dbReference>
<dbReference type="RefSeq" id="WP_011618115.1">
    <property type="nucleotide sequence ID" value="NC_008319.1"/>
</dbReference>
<dbReference type="SMR" id="Q0IDV6"/>
<dbReference type="STRING" id="64471.sync_0129"/>
<dbReference type="KEGG" id="syg:sync_0129"/>
<dbReference type="eggNOG" id="COG0422">
    <property type="taxonomic scope" value="Bacteria"/>
</dbReference>
<dbReference type="HOGENOM" id="CLU_013181_2_1_3"/>
<dbReference type="OrthoDB" id="9805897at2"/>
<dbReference type="UniPathway" id="UPA00060"/>
<dbReference type="Proteomes" id="UP000001961">
    <property type="component" value="Chromosome"/>
</dbReference>
<dbReference type="GO" id="GO:0005829">
    <property type="term" value="C:cytosol"/>
    <property type="evidence" value="ECO:0007669"/>
    <property type="project" value="TreeGrafter"/>
</dbReference>
<dbReference type="GO" id="GO:0051539">
    <property type="term" value="F:4 iron, 4 sulfur cluster binding"/>
    <property type="evidence" value="ECO:0007669"/>
    <property type="project" value="UniProtKB-KW"/>
</dbReference>
<dbReference type="GO" id="GO:0016830">
    <property type="term" value="F:carbon-carbon lyase activity"/>
    <property type="evidence" value="ECO:0007669"/>
    <property type="project" value="InterPro"/>
</dbReference>
<dbReference type="GO" id="GO:0008270">
    <property type="term" value="F:zinc ion binding"/>
    <property type="evidence" value="ECO:0007669"/>
    <property type="project" value="UniProtKB-UniRule"/>
</dbReference>
<dbReference type="GO" id="GO:0009228">
    <property type="term" value="P:thiamine biosynthetic process"/>
    <property type="evidence" value="ECO:0007669"/>
    <property type="project" value="UniProtKB-KW"/>
</dbReference>
<dbReference type="GO" id="GO:0009229">
    <property type="term" value="P:thiamine diphosphate biosynthetic process"/>
    <property type="evidence" value="ECO:0007669"/>
    <property type="project" value="UniProtKB-UniRule"/>
</dbReference>
<dbReference type="FunFam" id="3.20.20.540:FF:000001">
    <property type="entry name" value="Phosphomethylpyrimidine synthase"/>
    <property type="match status" value="1"/>
</dbReference>
<dbReference type="Gene3D" id="6.10.250.620">
    <property type="match status" value="1"/>
</dbReference>
<dbReference type="Gene3D" id="3.20.20.540">
    <property type="entry name" value="Radical SAM ThiC family, central domain"/>
    <property type="match status" value="1"/>
</dbReference>
<dbReference type="HAMAP" id="MF_00089">
    <property type="entry name" value="ThiC"/>
    <property type="match status" value="1"/>
</dbReference>
<dbReference type="InterPro" id="IPR037509">
    <property type="entry name" value="ThiC"/>
</dbReference>
<dbReference type="InterPro" id="IPR038521">
    <property type="entry name" value="ThiC/Bza_core_dom"/>
</dbReference>
<dbReference type="InterPro" id="IPR002817">
    <property type="entry name" value="ThiC/BzaA/B"/>
</dbReference>
<dbReference type="NCBIfam" id="NF006763">
    <property type="entry name" value="PRK09284.1"/>
    <property type="match status" value="1"/>
</dbReference>
<dbReference type="NCBIfam" id="NF009895">
    <property type="entry name" value="PRK13352.1"/>
    <property type="match status" value="1"/>
</dbReference>
<dbReference type="NCBIfam" id="TIGR00190">
    <property type="entry name" value="thiC"/>
    <property type="match status" value="1"/>
</dbReference>
<dbReference type="PANTHER" id="PTHR30557:SF1">
    <property type="entry name" value="PHOSPHOMETHYLPYRIMIDINE SYNTHASE, CHLOROPLASTIC"/>
    <property type="match status" value="1"/>
</dbReference>
<dbReference type="PANTHER" id="PTHR30557">
    <property type="entry name" value="THIAMINE BIOSYNTHESIS PROTEIN THIC"/>
    <property type="match status" value="1"/>
</dbReference>
<dbReference type="Pfam" id="PF01964">
    <property type="entry name" value="ThiC_Rad_SAM"/>
    <property type="match status" value="1"/>
</dbReference>
<dbReference type="SFLD" id="SFLDF00407">
    <property type="entry name" value="phosphomethylpyrimidine_syntha"/>
    <property type="match status" value="1"/>
</dbReference>
<dbReference type="SFLD" id="SFLDG01114">
    <property type="entry name" value="phosphomethylpyrimidine_syntha"/>
    <property type="match status" value="1"/>
</dbReference>
<dbReference type="SFLD" id="SFLDS00113">
    <property type="entry name" value="Radical_SAM_Phosphomethylpyrim"/>
    <property type="match status" value="1"/>
</dbReference>
<organism>
    <name type="scientific">Synechococcus sp. (strain CC9311)</name>
    <dbReference type="NCBI Taxonomy" id="64471"/>
    <lineage>
        <taxon>Bacteria</taxon>
        <taxon>Bacillati</taxon>
        <taxon>Cyanobacteriota</taxon>
        <taxon>Cyanophyceae</taxon>
        <taxon>Synechococcales</taxon>
        <taxon>Synechococcaceae</taxon>
        <taxon>Synechococcus</taxon>
    </lineage>
</organism>
<feature type="chain" id="PRO_1000004810" description="Phosphomethylpyrimidine synthase">
    <location>
        <begin position="1"/>
        <end position="465"/>
    </location>
</feature>
<feature type="binding site" evidence="1">
    <location>
        <position position="80"/>
    </location>
    <ligand>
        <name>substrate</name>
    </ligand>
</feature>
<feature type="binding site" evidence="1">
    <location>
        <position position="109"/>
    </location>
    <ligand>
        <name>substrate</name>
    </ligand>
</feature>
<feature type="binding site" evidence="1">
    <location>
        <position position="139"/>
    </location>
    <ligand>
        <name>substrate</name>
    </ligand>
</feature>
<feature type="binding site" evidence="1">
    <location>
        <position position="175"/>
    </location>
    <ligand>
        <name>substrate</name>
    </ligand>
</feature>
<feature type="binding site" evidence="1">
    <location>
        <begin position="195"/>
        <end position="197"/>
    </location>
    <ligand>
        <name>substrate</name>
    </ligand>
</feature>
<feature type="binding site" evidence="1">
    <location>
        <begin position="236"/>
        <end position="239"/>
    </location>
    <ligand>
        <name>substrate</name>
    </ligand>
</feature>
<feature type="binding site" evidence="1">
    <location>
        <position position="275"/>
    </location>
    <ligand>
        <name>substrate</name>
    </ligand>
</feature>
<feature type="binding site" evidence="1">
    <location>
        <position position="279"/>
    </location>
    <ligand>
        <name>Zn(2+)</name>
        <dbReference type="ChEBI" id="CHEBI:29105"/>
    </ligand>
</feature>
<feature type="binding site" evidence="1">
    <location>
        <position position="302"/>
    </location>
    <ligand>
        <name>substrate</name>
    </ligand>
</feature>
<feature type="binding site" evidence="1">
    <location>
        <position position="343"/>
    </location>
    <ligand>
        <name>Zn(2+)</name>
        <dbReference type="ChEBI" id="CHEBI:29105"/>
    </ligand>
</feature>
<feature type="binding site" evidence="1">
    <location>
        <position position="423"/>
    </location>
    <ligand>
        <name>[4Fe-4S] cluster</name>
        <dbReference type="ChEBI" id="CHEBI:49883"/>
        <note>4Fe-4S-S-AdoMet</note>
    </ligand>
</feature>
<feature type="binding site" evidence="1">
    <location>
        <position position="426"/>
    </location>
    <ligand>
        <name>[4Fe-4S] cluster</name>
        <dbReference type="ChEBI" id="CHEBI:49883"/>
        <note>4Fe-4S-S-AdoMet</note>
    </ligand>
</feature>
<feature type="binding site" evidence="1">
    <location>
        <position position="431"/>
    </location>
    <ligand>
        <name>[4Fe-4S] cluster</name>
        <dbReference type="ChEBI" id="CHEBI:49883"/>
        <note>4Fe-4S-S-AdoMet</note>
    </ligand>
</feature>
<name>THIC_SYNS3</name>
<gene>
    <name evidence="1" type="primary">thiC</name>
    <name type="ordered locus">sync_0129</name>
</gene>